<organism>
    <name type="scientific">Wolinella succinogenes (strain ATCC 29543 / DSM 1740 / CCUG 13145 / JCM 31913 / LMG 7466 / NCTC 11488 / FDC 602W)</name>
    <name type="common">Vibrio succinogenes</name>
    <dbReference type="NCBI Taxonomy" id="273121"/>
    <lineage>
        <taxon>Bacteria</taxon>
        <taxon>Pseudomonadati</taxon>
        <taxon>Campylobacterota</taxon>
        <taxon>Epsilonproteobacteria</taxon>
        <taxon>Campylobacterales</taxon>
        <taxon>Helicobacteraceae</taxon>
        <taxon>Wolinella</taxon>
    </lineage>
</organism>
<name>SYGA_WOLSU</name>
<sequence>MITFSDLLLKLQTFWKEQGCLIVQPYDIPAGAGTFHPATLLRSLDSKPWSVAYVAPSRRPTDGRYGENPNRLGSYYQFQVIIKPSPDNIQELYLKSLEYLGLNLKEHDIRFVEDNWESPTLGAWGLGWEVWLDGMEVTQFTYFQQVGGIACDPVAVEITYGTERLAMYLQEVENVFDIEWSQGVSYADVHLEGEYEFSKYHFEVADTQRLLTLFEEAQGESKRCLEALLPLPAYDWTMLSSHMFNVLDARKAISATERQNYILKIRELAKGCAELYKGQEEEREARLARAKNR</sequence>
<dbReference type="EC" id="6.1.1.14" evidence="1"/>
<dbReference type="EMBL" id="BX571662">
    <property type="protein sequence ID" value="CAE11116.1"/>
    <property type="molecule type" value="Genomic_DNA"/>
</dbReference>
<dbReference type="RefSeq" id="WP_011139898.1">
    <property type="nucleotide sequence ID" value="NC_005090.1"/>
</dbReference>
<dbReference type="SMR" id="Q7M7S2"/>
<dbReference type="STRING" id="273121.WS2118"/>
<dbReference type="KEGG" id="wsu:WS2118"/>
<dbReference type="eggNOG" id="COG0752">
    <property type="taxonomic scope" value="Bacteria"/>
</dbReference>
<dbReference type="HOGENOM" id="CLU_057066_1_0_7"/>
<dbReference type="Proteomes" id="UP000000422">
    <property type="component" value="Chromosome"/>
</dbReference>
<dbReference type="GO" id="GO:0005829">
    <property type="term" value="C:cytosol"/>
    <property type="evidence" value="ECO:0007669"/>
    <property type="project" value="TreeGrafter"/>
</dbReference>
<dbReference type="GO" id="GO:0005524">
    <property type="term" value="F:ATP binding"/>
    <property type="evidence" value="ECO:0007669"/>
    <property type="project" value="UniProtKB-UniRule"/>
</dbReference>
<dbReference type="GO" id="GO:0004820">
    <property type="term" value="F:glycine-tRNA ligase activity"/>
    <property type="evidence" value="ECO:0007669"/>
    <property type="project" value="UniProtKB-UniRule"/>
</dbReference>
<dbReference type="GO" id="GO:0006426">
    <property type="term" value="P:glycyl-tRNA aminoacylation"/>
    <property type="evidence" value="ECO:0007669"/>
    <property type="project" value="UniProtKB-UniRule"/>
</dbReference>
<dbReference type="CDD" id="cd00733">
    <property type="entry name" value="GlyRS_alpha_core"/>
    <property type="match status" value="1"/>
</dbReference>
<dbReference type="FunFam" id="3.30.930.10:FF:000006">
    <property type="entry name" value="Glycine--tRNA ligase alpha subunit"/>
    <property type="match status" value="1"/>
</dbReference>
<dbReference type="Gene3D" id="3.30.930.10">
    <property type="entry name" value="Bira Bifunctional Protein, Domain 2"/>
    <property type="match status" value="1"/>
</dbReference>
<dbReference type="Gene3D" id="1.20.58.180">
    <property type="entry name" value="Class II aaRS and biotin synthetases, domain 2"/>
    <property type="match status" value="1"/>
</dbReference>
<dbReference type="HAMAP" id="MF_00254">
    <property type="entry name" value="Gly_tRNA_synth_alpha"/>
    <property type="match status" value="1"/>
</dbReference>
<dbReference type="InterPro" id="IPR045864">
    <property type="entry name" value="aa-tRNA-synth_II/BPL/LPL"/>
</dbReference>
<dbReference type="InterPro" id="IPR006194">
    <property type="entry name" value="Gly-tRNA-synth_heterodimer"/>
</dbReference>
<dbReference type="InterPro" id="IPR002310">
    <property type="entry name" value="Gly-tRNA_ligase_asu"/>
</dbReference>
<dbReference type="NCBIfam" id="TIGR00388">
    <property type="entry name" value="glyQ"/>
    <property type="match status" value="1"/>
</dbReference>
<dbReference type="NCBIfam" id="NF006827">
    <property type="entry name" value="PRK09348.1"/>
    <property type="match status" value="1"/>
</dbReference>
<dbReference type="PANTHER" id="PTHR30075:SF2">
    <property type="entry name" value="GLYCINE--TRNA LIGASE, CHLOROPLASTIC_MITOCHONDRIAL 2"/>
    <property type="match status" value="1"/>
</dbReference>
<dbReference type="PANTHER" id="PTHR30075">
    <property type="entry name" value="GLYCYL-TRNA SYNTHETASE"/>
    <property type="match status" value="1"/>
</dbReference>
<dbReference type="Pfam" id="PF02091">
    <property type="entry name" value="tRNA-synt_2e"/>
    <property type="match status" value="1"/>
</dbReference>
<dbReference type="PRINTS" id="PR01044">
    <property type="entry name" value="TRNASYNTHGA"/>
</dbReference>
<dbReference type="SUPFAM" id="SSF55681">
    <property type="entry name" value="Class II aaRS and biotin synthetases"/>
    <property type="match status" value="1"/>
</dbReference>
<dbReference type="PROSITE" id="PS50861">
    <property type="entry name" value="AA_TRNA_LIGASE_II_GLYAB"/>
    <property type="match status" value="1"/>
</dbReference>
<feature type="chain" id="PRO_1000047528" description="Glycine--tRNA ligase alpha subunit">
    <location>
        <begin position="1"/>
        <end position="293"/>
    </location>
</feature>
<accession>Q7M7S2</accession>
<gene>
    <name evidence="1" type="primary">glyQ</name>
    <name type="ordered locus">WS2118</name>
</gene>
<keyword id="KW-0030">Aminoacyl-tRNA synthetase</keyword>
<keyword id="KW-0067">ATP-binding</keyword>
<keyword id="KW-0963">Cytoplasm</keyword>
<keyword id="KW-0436">Ligase</keyword>
<keyword id="KW-0547">Nucleotide-binding</keyword>
<keyword id="KW-0648">Protein biosynthesis</keyword>
<keyword id="KW-1185">Reference proteome</keyword>
<evidence type="ECO:0000255" key="1">
    <source>
        <dbReference type="HAMAP-Rule" id="MF_00254"/>
    </source>
</evidence>
<protein>
    <recommendedName>
        <fullName evidence="1">Glycine--tRNA ligase alpha subunit</fullName>
        <ecNumber evidence="1">6.1.1.14</ecNumber>
    </recommendedName>
    <alternativeName>
        <fullName evidence="1">Glycyl-tRNA synthetase alpha subunit</fullName>
        <shortName evidence="1">GlyRS</shortName>
    </alternativeName>
</protein>
<comment type="catalytic activity">
    <reaction evidence="1">
        <text>tRNA(Gly) + glycine + ATP = glycyl-tRNA(Gly) + AMP + diphosphate</text>
        <dbReference type="Rhea" id="RHEA:16013"/>
        <dbReference type="Rhea" id="RHEA-COMP:9664"/>
        <dbReference type="Rhea" id="RHEA-COMP:9683"/>
        <dbReference type="ChEBI" id="CHEBI:30616"/>
        <dbReference type="ChEBI" id="CHEBI:33019"/>
        <dbReference type="ChEBI" id="CHEBI:57305"/>
        <dbReference type="ChEBI" id="CHEBI:78442"/>
        <dbReference type="ChEBI" id="CHEBI:78522"/>
        <dbReference type="ChEBI" id="CHEBI:456215"/>
        <dbReference type="EC" id="6.1.1.14"/>
    </reaction>
</comment>
<comment type="subunit">
    <text evidence="1">Tetramer of two alpha and two beta subunits.</text>
</comment>
<comment type="subcellular location">
    <subcellularLocation>
        <location evidence="1">Cytoplasm</location>
    </subcellularLocation>
</comment>
<comment type="similarity">
    <text evidence="1">Belongs to the class-II aminoacyl-tRNA synthetase family.</text>
</comment>
<reference key="1">
    <citation type="journal article" date="2003" name="Proc. Natl. Acad. Sci. U.S.A.">
        <title>Complete genome sequence and analysis of Wolinella succinogenes.</title>
        <authorList>
            <person name="Baar C."/>
            <person name="Eppinger M."/>
            <person name="Raddatz G."/>
            <person name="Simon J."/>
            <person name="Lanz C."/>
            <person name="Klimmek O."/>
            <person name="Nandakumar R."/>
            <person name="Gross R."/>
            <person name="Rosinus A."/>
            <person name="Keller H."/>
            <person name="Jagtap P."/>
            <person name="Linke B."/>
            <person name="Meyer F."/>
            <person name="Lederer H."/>
            <person name="Schuster S.C."/>
        </authorList>
    </citation>
    <scope>NUCLEOTIDE SEQUENCE [LARGE SCALE GENOMIC DNA]</scope>
    <source>
        <strain>ATCC 29543 / DSM 1740 / CCUG 13145 / JCM 31913 / LMG 7466 / NCTC 11488 / FDC 602W</strain>
    </source>
</reference>
<proteinExistence type="inferred from homology"/>